<accession>A0LV84</accession>
<organism>
    <name type="scientific">Acidothermus cellulolyticus (strain ATCC 43068 / DSM 8971 / 11B)</name>
    <dbReference type="NCBI Taxonomy" id="351607"/>
    <lineage>
        <taxon>Bacteria</taxon>
        <taxon>Bacillati</taxon>
        <taxon>Actinomycetota</taxon>
        <taxon>Actinomycetes</taxon>
        <taxon>Acidothermales</taxon>
        <taxon>Acidothermaceae</taxon>
        <taxon>Acidothermus</taxon>
    </lineage>
</organism>
<dbReference type="EC" id="3.6.1.7"/>
<dbReference type="EMBL" id="CP000481">
    <property type="protein sequence ID" value="ABK53344.1"/>
    <property type="molecule type" value="Genomic_DNA"/>
</dbReference>
<dbReference type="RefSeq" id="WP_011720407.1">
    <property type="nucleotide sequence ID" value="NC_008578.1"/>
</dbReference>
<dbReference type="SMR" id="A0LV84"/>
<dbReference type="FunCoup" id="A0LV84">
    <property type="interactions" value="19"/>
</dbReference>
<dbReference type="STRING" id="351607.Acel_1572"/>
<dbReference type="KEGG" id="ace:Acel_1572"/>
<dbReference type="eggNOG" id="COG1254">
    <property type="taxonomic scope" value="Bacteria"/>
</dbReference>
<dbReference type="HOGENOM" id="CLU_141932_3_0_11"/>
<dbReference type="InParanoid" id="A0LV84"/>
<dbReference type="OrthoDB" id="3182027at2"/>
<dbReference type="Proteomes" id="UP000008221">
    <property type="component" value="Chromosome"/>
</dbReference>
<dbReference type="GO" id="GO:0003998">
    <property type="term" value="F:acylphosphatase activity"/>
    <property type="evidence" value="ECO:0007669"/>
    <property type="project" value="UniProtKB-EC"/>
</dbReference>
<dbReference type="Gene3D" id="3.30.70.100">
    <property type="match status" value="1"/>
</dbReference>
<dbReference type="InterPro" id="IPR020456">
    <property type="entry name" value="Acylphosphatase"/>
</dbReference>
<dbReference type="InterPro" id="IPR001792">
    <property type="entry name" value="Acylphosphatase-like_dom"/>
</dbReference>
<dbReference type="InterPro" id="IPR036046">
    <property type="entry name" value="Acylphosphatase-like_dom_sf"/>
</dbReference>
<dbReference type="InterPro" id="IPR017968">
    <property type="entry name" value="Acylphosphatase_CS"/>
</dbReference>
<dbReference type="NCBIfam" id="NF010997">
    <property type="entry name" value="PRK14422.1"/>
    <property type="match status" value="1"/>
</dbReference>
<dbReference type="PANTHER" id="PTHR47268">
    <property type="entry name" value="ACYLPHOSPHATASE"/>
    <property type="match status" value="1"/>
</dbReference>
<dbReference type="PANTHER" id="PTHR47268:SF4">
    <property type="entry name" value="ACYLPHOSPHATASE"/>
    <property type="match status" value="1"/>
</dbReference>
<dbReference type="Pfam" id="PF00708">
    <property type="entry name" value="Acylphosphatase"/>
    <property type="match status" value="1"/>
</dbReference>
<dbReference type="SUPFAM" id="SSF54975">
    <property type="entry name" value="Acylphosphatase/BLUF domain-like"/>
    <property type="match status" value="1"/>
</dbReference>
<dbReference type="PROSITE" id="PS00150">
    <property type="entry name" value="ACYLPHOSPHATASE_1"/>
    <property type="match status" value="1"/>
</dbReference>
<dbReference type="PROSITE" id="PS51160">
    <property type="entry name" value="ACYLPHOSPHATASE_3"/>
    <property type="match status" value="1"/>
</dbReference>
<protein>
    <recommendedName>
        <fullName>Acylphosphatase</fullName>
        <ecNumber>3.6.1.7</ecNumber>
    </recommendedName>
    <alternativeName>
        <fullName>Acylphosphate phosphohydrolase</fullName>
    </alternativeName>
</protein>
<proteinExistence type="inferred from homology"/>
<name>ACYP_ACIC1</name>
<evidence type="ECO:0000255" key="1">
    <source>
        <dbReference type="PROSITE-ProRule" id="PRU00520"/>
    </source>
</evidence>
<evidence type="ECO:0000305" key="2"/>
<sequence length="105" mass="11475">MTDVARPDVQACEQVRLTAWVRGRVQGVGFRWWVRARALELGLTGVARNLPDSRVEVVAEGPRERCAELLELLSGVPRHGRPGFVAGVTAEWSTARGGYSGFTQA</sequence>
<reference key="1">
    <citation type="journal article" date="2009" name="Genome Res.">
        <title>Complete genome of the cellulolytic thermophile Acidothermus cellulolyticus 11B provides insights into its ecophysiological and evolutionary adaptations.</title>
        <authorList>
            <person name="Barabote R.D."/>
            <person name="Xie G."/>
            <person name="Leu D.H."/>
            <person name="Normand P."/>
            <person name="Necsulea A."/>
            <person name="Daubin V."/>
            <person name="Medigue C."/>
            <person name="Adney W.S."/>
            <person name="Xu X.C."/>
            <person name="Lapidus A."/>
            <person name="Parales R.E."/>
            <person name="Detter C."/>
            <person name="Pujic P."/>
            <person name="Bruce D."/>
            <person name="Lavire C."/>
            <person name="Challacombe J.F."/>
            <person name="Brettin T.S."/>
            <person name="Berry A.M."/>
        </authorList>
    </citation>
    <scope>NUCLEOTIDE SEQUENCE [LARGE SCALE GENOMIC DNA]</scope>
    <source>
        <strain>ATCC 43068 / DSM 8971 / 11B</strain>
    </source>
</reference>
<comment type="catalytic activity">
    <reaction>
        <text>an acyl phosphate + H2O = a carboxylate + phosphate + H(+)</text>
        <dbReference type="Rhea" id="RHEA:14965"/>
        <dbReference type="ChEBI" id="CHEBI:15377"/>
        <dbReference type="ChEBI" id="CHEBI:15378"/>
        <dbReference type="ChEBI" id="CHEBI:29067"/>
        <dbReference type="ChEBI" id="CHEBI:43474"/>
        <dbReference type="ChEBI" id="CHEBI:59918"/>
        <dbReference type="EC" id="3.6.1.7"/>
    </reaction>
</comment>
<comment type="similarity">
    <text evidence="2">Belongs to the acylphosphatase family.</text>
</comment>
<gene>
    <name type="primary">acyP</name>
    <name type="ordered locus">Acel_1572</name>
</gene>
<keyword id="KW-0378">Hydrolase</keyword>
<keyword id="KW-1185">Reference proteome</keyword>
<feature type="chain" id="PRO_0000326640" description="Acylphosphatase">
    <location>
        <begin position="1"/>
        <end position="105"/>
    </location>
</feature>
<feature type="domain" description="Acylphosphatase-like" evidence="1">
    <location>
        <begin position="16"/>
        <end position="105"/>
    </location>
</feature>
<feature type="active site" evidence="1">
    <location>
        <position position="31"/>
    </location>
</feature>
<feature type="active site" evidence="1">
    <location>
        <position position="49"/>
    </location>
</feature>